<accession>Q1J4X9</accession>
<reference key="1">
    <citation type="journal article" date="2006" name="Proc. Natl. Acad. Sci. U.S.A.">
        <title>Molecular genetic anatomy of inter- and intraserotype variation in the human bacterial pathogen group A Streptococcus.</title>
        <authorList>
            <person name="Beres S.B."/>
            <person name="Richter E.W."/>
            <person name="Nagiec M.J."/>
            <person name="Sumby P."/>
            <person name="Porcella S.F."/>
            <person name="DeLeo F.R."/>
            <person name="Musser J.M."/>
        </authorList>
    </citation>
    <scope>NUCLEOTIDE SEQUENCE [LARGE SCALE GENOMIC DNA]</scope>
    <source>
        <strain>MGAS10750</strain>
    </source>
</reference>
<name>PGK_STRPF</name>
<gene>
    <name evidence="1" type="primary">pgk</name>
    <name type="ordered locus">MGAS10750_Spy1657</name>
</gene>
<comment type="catalytic activity">
    <reaction evidence="1">
        <text>(2R)-3-phosphoglycerate + ATP = (2R)-3-phospho-glyceroyl phosphate + ADP</text>
        <dbReference type="Rhea" id="RHEA:14801"/>
        <dbReference type="ChEBI" id="CHEBI:30616"/>
        <dbReference type="ChEBI" id="CHEBI:57604"/>
        <dbReference type="ChEBI" id="CHEBI:58272"/>
        <dbReference type="ChEBI" id="CHEBI:456216"/>
        <dbReference type="EC" id="2.7.2.3"/>
    </reaction>
</comment>
<comment type="pathway">
    <text evidence="1">Carbohydrate degradation; glycolysis; pyruvate from D-glyceraldehyde 3-phosphate: step 2/5.</text>
</comment>
<comment type="subunit">
    <text evidence="1">Monomer.</text>
</comment>
<comment type="subcellular location">
    <subcellularLocation>
        <location evidence="1">Cytoplasm</location>
    </subcellularLocation>
</comment>
<comment type="similarity">
    <text evidence="1">Belongs to the phosphoglycerate kinase family.</text>
</comment>
<evidence type="ECO:0000255" key="1">
    <source>
        <dbReference type="HAMAP-Rule" id="MF_00145"/>
    </source>
</evidence>
<proteinExistence type="inferred from homology"/>
<protein>
    <recommendedName>
        <fullName evidence="1">Phosphoglycerate kinase</fullName>
        <ecNumber evidence="1">2.7.2.3</ecNumber>
    </recommendedName>
</protein>
<feature type="chain" id="PRO_1000009657" description="Phosphoglycerate kinase">
    <location>
        <begin position="1"/>
        <end position="398"/>
    </location>
</feature>
<feature type="binding site" evidence="1">
    <location>
        <begin position="21"/>
        <end position="23"/>
    </location>
    <ligand>
        <name>substrate</name>
    </ligand>
</feature>
<feature type="binding site" evidence="1">
    <location>
        <position position="36"/>
    </location>
    <ligand>
        <name>substrate</name>
    </ligand>
</feature>
<feature type="binding site" evidence="1">
    <location>
        <begin position="59"/>
        <end position="62"/>
    </location>
    <ligand>
        <name>substrate</name>
    </ligand>
</feature>
<feature type="binding site" evidence="1">
    <location>
        <position position="119"/>
    </location>
    <ligand>
        <name>substrate</name>
    </ligand>
</feature>
<feature type="binding site" evidence="1">
    <location>
        <position position="157"/>
    </location>
    <ligand>
        <name>substrate</name>
    </ligand>
</feature>
<feature type="binding site" evidence="1">
    <location>
        <position position="208"/>
    </location>
    <ligand>
        <name>ATP</name>
        <dbReference type="ChEBI" id="CHEBI:30616"/>
    </ligand>
</feature>
<feature type="binding site" evidence="1">
    <location>
        <position position="296"/>
    </location>
    <ligand>
        <name>ATP</name>
        <dbReference type="ChEBI" id="CHEBI:30616"/>
    </ligand>
</feature>
<feature type="binding site" evidence="1">
    <location>
        <position position="327"/>
    </location>
    <ligand>
        <name>ATP</name>
        <dbReference type="ChEBI" id="CHEBI:30616"/>
    </ligand>
</feature>
<feature type="binding site" evidence="1">
    <location>
        <begin position="354"/>
        <end position="357"/>
    </location>
    <ligand>
        <name>ATP</name>
        <dbReference type="ChEBI" id="CHEBI:30616"/>
    </ligand>
</feature>
<sequence length="398" mass="42130">MAKLTVKDVDLKGKKVLVRVDFNVPLKDGVITNDNRITAALPTIKYIIEQGGRAILFSHLGRVKEEADKEGKSLAPVAADLAAKLGQDVVFPGVTRGSKLEEAINALEDGQVLLVENTRFEDVDGKKESKNDEELGKYWASLGDGIFVNDAFGTAHRAHASNVGISANVEKAVAGFLLENEIAYIQEAVETPERPFVAILGGSKVSDKIGVIENLLEKADKVLIGGGMTYTFYKAQGIEIGNSLVEEDKLDVAKDLLEKSNGKLILPVDSKEANAFAGYTEVRDTEGEAVSEGFLGLDIGPKSIAKFDEALTGAKTVVWNGPMGVFENPDFQAGTIGVMDAIVKQPGVKSIIGGGDSAAAAINLGRADKFSWISTGGGASMELLEGKVLPGLAALTEK</sequence>
<keyword id="KW-0067">ATP-binding</keyword>
<keyword id="KW-0963">Cytoplasm</keyword>
<keyword id="KW-0324">Glycolysis</keyword>
<keyword id="KW-0418">Kinase</keyword>
<keyword id="KW-0547">Nucleotide-binding</keyword>
<keyword id="KW-0808">Transferase</keyword>
<organism>
    <name type="scientific">Streptococcus pyogenes serotype M4 (strain MGAS10750)</name>
    <dbReference type="NCBI Taxonomy" id="370554"/>
    <lineage>
        <taxon>Bacteria</taxon>
        <taxon>Bacillati</taxon>
        <taxon>Bacillota</taxon>
        <taxon>Bacilli</taxon>
        <taxon>Lactobacillales</taxon>
        <taxon>Streptococcaceae</taxon>
        <taxon>Streptococcus</taxon>
    </lineage>
</organism>
<dbReference type="EC" id="2.7.2.3" evidence="1"/>
<dbReference type="EMBL" id="CP000262">
    <property type="protein sequence ID" value="ABF38607.1"/>
    <property type="molecule type" value="Genomic_DNA"/>
</dbReference>
<dbReference type="SMR" id="Q1J4X9"/>
<dbReference type="KEGG" id="spi:MGAS10750_Spy1657"/>
<dbReference type="HOGENOM" id="CLU_025427_0_1_9"/>
<dbReference type="UniPathway" id="UPA00109">
    <property type="reaction ID" value="UER00185"/>
</dbReference>
<dbReference type="Proteomes" id="UP000002434">
    <property type="component" value="Chromosome"/>
</dbReference>
<dbReference type="GO" id="GO:0005829">
    <property type="term" value="C:cytosol"/>
    <property type="evidence" value="ECO:0007669"/>
    <property type="project" value="TreeGrafter"/>
</dbReference>
<dbReference type="GO" id="GO:0043531">
    <property type="term" value="F:ADP binding"/>
    <property type="evidence" value="ECO:0007669"/>
    <property type="project" value="TreeGrafter"/>
</dbReference>
<dbReference type="GO" id="GO:0005524">
    <property type="term" value="F:ATP binding"/>
    <property type="evidence" value="ECO:0007669"/>
    <property type="project" value="UniProtKB-KW"/>
</dbReference>
<dbReference type="GO" id="GO:0004618">
    <property type="term" value="F:phosphoglycerate kinase activity"/>
    <property type="evidence" value="ECO:0007669"/>
    <property type="project" value="UniProtKB-UniRule"/>
</dbReference>
<dbReference type="GO" id="GO:0006094">
    <property type="term" value="P:gluconeogenesis"/>
    <property type="evidence" value="ECO:0007669"/>
    <property type="project" value="TreeGrafter"/>
</dbReference>
<dbReference type="GO" id="GO:0006096">
    <property type="term" value="P:glycolytic process"/>
    <property type="evidence" value="ECO:0007669"/>
    <property type="project" value="UniProtKB-UniRule"/>
</dbReference>
<dbReference type="FunFam" id="3.40.50.1260:FF:000001">
    <property type="entry name" value="Phosphoglycerate kinase"/>
    <property type="match status" value="1"/>
</dbReference>
<dbReference type="FunFam" id="3.40.50.1260:FF:000008">
    <property type="entry name" value="Phosphoglycerate kinase"/>
    <property type="match status" value="1"/>
</dbReference>
<dbReference type="Gene3D" id="3.40.50.1260">
    <property type="entry name" value="Phosphoglycerate kinase, N-terminal domain"/>
    <property type="match status" value="2"/>
</dbReference>
<dbReference type="HAMAP" id="MF_00145">
    <property type="entry name" value="Phosphoglyc_kinase"/>
    <property type="match status" value="1"/>
</dbReference>
<dbReference type="InterPro" id="IPR001576">
    <property type="entry name" value="Phosphoglycerate_kinase"/>
</dbReference>
<dbReference type="InterPro" id="IPR015911">
    <property type="entry name" value="Phosphoglycerate_kinase_CS"/>
</dbReference>
<dbReference type="InterPro" id="IPR015824">
    <property type="entry name" value="Phosphoglycerate_kinase_N"/>
</dbReference>
<dbReference type="InterPro" id="IPR036043">
    <property type="entry name" value="Phosphoglycerate_kinase_sf"/>
</dbReference>
<dbReference type="PANTHER" id="PTHR11406">
    <property type="entry name" value="PHOSPHOGLYCERATE KINASE"/>
    <property type="match status" value="1"/>
</dbReference>
<dbReference type="PANTHER" id="PTHR11406:SF23">
    <property type="entry name" value="PHOSPHOGLYCERATE KINASE 1, CHLOROPLASTIC-RELATED"/>
    <property type="match status" value="1"/>
</dbReference>
<dbReference type="Pfam" id="PF00162">
    <property type="entry name" value="PGK"/>
    <property type="match status" value="1"/>
</dbReference>
<dbReference type="PIRSF" id="PIRSF000724">
    <property type="entry name" value="Pgk"/>
    <property type="match status" value="1"/>
</dbReference>
<dbReference type="PRINTS" id="PR00477">
    <property type="entry name" value="PHGLYCKINASE"/>
</dbReference>
<dbReference type="SUPFAM" id="SSF53748">
    <property type="entry name" value="Phosphoglycerate kinase"/>
    <property type="match status" value="1"/>
</dbReference>
<dbReference type="PROSITE" id="PS00111">
    <property type="entry name" value="PGLYCERATE_KINASE"/>
    <property type="match status" value="1"/>
</dbReference>